<dbReference type="EMBL" id="CR860304">
    <property type="protein sequence ID" value="CAH92441.1"/>
    <property type="molecule type" value="mRNA"/>
</dbReference>
<dbReference type="RefSeq" id="NP_001126440.1">
    <property type="nucleotide sequence ID" value="NM_001132968.1"/>
</dbReference>
<dbReference type="SMR" id="Q5R719"/>
<dbReference type="STRING" id="9601.ENSPPYP00000004240"/>
<dbReference type="GeneID" id="100173424"/>
<dbReference type="KEGG" id="pon:100173424"/>
<dbReference type="CTD" id="1207"/>
<dbReference type="eggNOG" id="KOG3238">
    <property type="taxonomic scope" value="Eukaryota"/>
</dbReference>
<dbReference type="InParanoid" id="Q5R719"/>
<dbReference type="OrthoDB" id="19714at2759"/>
<dbReference type="Proteomes" id="UP000001595">
    <property type="component" value="Unplaced"/>
</dbReference>
<dbReference type="GO" id="GO:0005856">
    <property type="term" value="C:cytoskeleton"/>
    <property type="evidence" value="ECO:0007669"/>
    <property type="project" value="UniProtKB-SubCell"/>
</dbReference>
<dbReference type="GO" id="GO:0005829">
    <property type="term" value="C:cytosol"/>
    <property type="evidence" value="ECO:0000250"/>
    <property type="project" value="UniProtKB"/>
</dbReference>
<dbReference type="GO" id="GO:0034709">
    <property type="term" value="C:methylosome"/>
    <property type="evidence" value="ECO:0000250"/>
    <property type="project" value="UniProtKB"/>
</dbReference>
<dbReference type="GO" id="GO:0005634">
    <property type="term" value="C:nucleus"/>
    <property type="evidence" value="ECO:0000250"/>
    <property type="project" value="UniProtKB"/>
</dbReference>
<dbReference type="GO" id="GO:0034715">
    <property type="term" value="C:pICln-Sm protein complex"/>
    <property type="evidence" value="ECO:0000250"/>
    <property type="project" value="UniProtKB"/>
</dbReference>
<dbReference type="GO" id="GO:0005886">
    <property type="term" value="C:plasma membrane"/>
    <property type="evidence" value="ECO:0007669"/>
    <property type="project" value="InterPro"/>
</dbReference>
<dbReference type="GO" id="GO:0005681">
    <property type="term" value="C:spliceosomal complex"/>
    <property type="evidence" value="ECO:0007669"/>
    <property type="project" value="TreeGrafter"/>
</dbReference>
<dbReference type="GO" id="GO:0006884">
    <property type="term" value="P:cell volume homeostasis"/>
    <property type="evidence" value="ECO:0007669"/>
    <property type="project" value="InterPro"/>
</dbReference>
<dbReference type="GO" id="GO:0006821">
    <property type="term" value="P:chloride transport"/>
    <property type="evidence" value="ECO:0007669"/>
    <property type="project" value="InterPro"/>
</dbReference>
<dbReference type="GO" id="GO:0045292">
    <property type="term" value="P:mRNA cis splicing, via spliceosome"/>
    <property type="evidence" value="ECO:0007669"/>
    <property type="project" value="TreeGrafter"/>
</dbReference>
<dbReference type="GO" id="GO:0000387">
    <property type="term" value="P:spliceosomal snRNP assembly"/>
    <property type="evidence" value="ECO:0000250"/>
    <property type="project" value="UniProtKB"/>
</dbReference>
<dbReference type="FunFam" id="2.30.29.30:FF:000220">
    <property type="entry name" value="methylosome subunit pICln isoform X1"/>
    <property type="match status" value="1"/>
</dbReference>
<dbReference type="Gene3D" id="2.30.29.30">
    <property type="entry name" value="Pleckstrin-homology domain (PH domain)/Phosphotyrosine-binding domain (PTB)"/>
    <property type="match status" value="1"/>
</dbReference>
<dbReference type="InterPro" id="IPR003521">
    <property type="entry name" value="ICln"/>
</dbReference>
<dbReference type="InterPro" id="IPR039924">
    <property type="entry name" value="ICln/Lot5/Saf5"/>
</dbReference>
<dbReference type="InterPro" id="IPR011993">
    <property type="entry name" value="PH-like_dom_sf"/>
</dbReference>
<dbReference type="PANTHER" id="PTHR21399">
    <property type="entry name" value="CHLORIDE CONDUCTANCE REGULATORY PROTEIN ICLN"/>
    <property type="match status" value="1"/>
</dbReference>
<dbReference type="PANTHER" id="PTHR21399:SF0">
    <property type="entry name" value="METHYLOSOME SUBUNIT PICLN"/>
    <property type="match status" value="1"/>
</dbReference>
<dbReference type="Pfam" id="PF03517">
    <property type="entry name" value="Voldacs"/>
    <property type="match status" value="1"/>
</dbReference>
<dbReference type="PRINTS" id="PR01348">
    <property type="entry name" value="ICLNCHANNEL"/>
</dbReference>
<keyword id="KW-0007">Acetylation</keyword>
<keyword id="KW-0963">Cytoplasm</keyword>
<keyword id="KW-0206">Cytoskeleton</keyword>
<keyword id="KW-0507">mRNA processing</keyword>
<keyword id="KW-0508">mRNA splicing</keyword>
<keyword id="KW-0539">Nucleus</keyword>
<keyword id="KW-0597">Phosphoprotein</keyword>
<keyword id="KW-1185">Reference proteome</keyword>
<feature type="initiator methionine" description="Removed" evidence="1">
    <location>
        <position position="1"/>
    </location>
</feature>
<feature type="chain" id="PRO_0000224182" description="Methylosome subunit pICln">
    <location>
        <begin position="2"/>
        <end position="237"/>
    </location>
</feature>
<feature type="modified residue" description="N-acetylserine" evidence="1">
    <location>
        <position position="2"/>
    </location>
</feature>
<feature type="modified residue" description="Phosphoserine" evidence="1">
    <location>
        <position position="102"/>
    </location>
</feature>
<feature type="modified residue" description="Phosphoserine" evidence="1">
    <location>
        <position position="144"/>
    </location>
</feature>
<feature type="modified residue" description="Phosphoserine" evidence="1">
    <location>
        <position position="193"/>
    </location>
</feature>
<feature type="modified residue" description="Phosphoserine" evidence="1">
    <location>
        <position position="195"/>
    </location>
</feature>
<feature type="modified residue" description="Phosphothreonine" evidence="1">
    <location>
        <position position="223"/>
    </location>
</feature>
<proteinExistence type="evidence at transcript level"/>
<sequence length="237" mass="26272">MSFLKSFPPPGPAEGLLRQQPDTEAVLNGKGLGTGTLYIAESRLSWLDGSGLGFSLEYPTISLHALSRDRSDCLGEHLYVMVNAKFEEESKEPVADEEEEDSDDDVEPITEFRFVPSDKSALEAMFTAMCECQALHPDPEDEDSDDYDGEEYDVEAHEQGQGDIPTFYTYEEGLSHLTAEGQATQERLEGMLSQSVSCQYNMAGVRTEDLIRDYEDGMEVDTTPTVAGQFEDADVDH</sequence>
<organism>
    <name type="scientific">Pongo abelii</name>
    <name type="common">Sumatran orangutan</name>
    <name type="synonym">Pongo pygmaeus abelii</name>
    <dbReference type="NCBI Taxonomy" id="9601"/>
    <lineage>
        <taxon>Eukaryota</taxon>
        <taxon>Metazoa</taxon>
        <taxon>Chordata</taxon>
        <taxon>Craniata</taxon>
        <taxon>Vertebrata</taxon>
        <taxon>Euteleostomi</taxon>
        <taxon>Mammalia</taxon>
        <taxon>Eutheria</taxon>
        <taxon>Euarchontoglires</taxon>
        <taxon>Primates</taxon>
        <taxon>Haplorrhini</taxon>
        <taxon>Catarrhini</taxon>
        <taxon>Hominidae</taxon>
        <taxon>Pongo</taxon>
    </lineage>
</organism>
<protein>
    <recommendedName>
        <fullName>Methylosome subunit pICln</fullName>
    </recommendedName>
    <alternativeName>
        <fullName>Chloride channel, nucleotide sensitive 1A</fullName>
    </alternativeName>
    <alternativeName>
        <fullName>Chloride conductance regulatory protein ICln</fullName>
        <shortName>I(Cln)</shortName>
    </alternativeName>
</protein>
<accession>Q5R719</accession>
<comment type="function">
    <text evidence="1">Involved in both the assembly of spliceosomal snRNPs and the methylation of Sm proteins (By similarity). Chaperone that regulates the assembly of spliceosomal U1, U2, U4 and U5 small nuclear ribonucleoproteins (snRNPs), the building blocks of the spliceosome, and thereby plays an important role in the splicing of cellular pre-mRNAs (By similarity). Most spliceosomal snRNPs contain a common set of Sm proteins SNRPB, SNRPD1, SNRPD2, SNRPD3, SNRPE, SNRPF and SNRPG that assemble in a heptameric protein ring on the Sm site of the small nuclear RNA to form the core snRNP (Sm core) (By similarity). In the cytosol, the Sm proteins SNRPD1, SNRPD2, SNRPE, SNRPF and SNRPG are trapped in an inactive 6S pICln-Sm complex by the chaperone CLNS1A that controls the assembly of the core snRNP (By similarity). Dissociation by the SMN complex of CLNS1A from the trapped Sm proteins and their transfer to an SMN-Sm complex triggers the assembly of core snRNPs and their transport to the nucleus (By similarity).</text>
</comment>
<comment type="subunit">
    <text evidence="1">Component of the methylosome, a 20S complex containing at least PRMT5/SKB1, WDR77/MEP50 and CLNS1A/pICln. May mediate SNRPD1 and SNRPD3 methylation. Forms a 6S pICln-Sm complex composed of CLNS1A/pICln, SNRPD1, SNRPD2, SNRPE, SNRPF and SNRPG; ring-like structure where CLNS1A/pICln mimics additional Sm proteins and which is unable to assemble into the core snRNP. Interacts with LSM10 and LSM11 (By similarity).</text>
</comment>
<comment type="subcellular location">
    <subcellularLocation>
        <location evidence="1">Cytoplasm</location>
        <location evidence="1">Cytosol</location>
    </subcellularLocation>
    <subcellularLocation>
        <location evidence="1">Nucleus</location>
    </subcellularLocation>
    <subcellularLocation>
        <location evidence="1">Cytoplasm</location>
        <location evidence="1">Cytoskeleton</location>
    </subcellularLocation>
    <text evidence="1">A small fraction is also associated with the cytoskeleton.</text>
</comment>
<comment type="similarity">
    <text evidence="2">Belongs to the pICln (TC 1.A.47) family.</text>
</comment>
<reference key="1">
    <citation type="submission" date="2004-11" db="EMBL/GenBank/DDBJ databases">
        <authorList>
            <consortium name="The German cDNA consortium"/>
        </authorList>
    </citation>
    <scope>NUCLEOTIDE SEQUENCE [LARGE SCALE MRNA]</scope>
    <source>
        <tissue>Brain cortex</tissue>
    </source>
</reference>
<name>ICLN_PONAB</name>
<evidence type="ECO:0000250" key="1">
    <source>
        <dbReference type="UniProtKB" id="P54105"/>
    </source>
</evidence>
<evidence type="ECO:0000305" key="2"/>
<gene>
    <name type="primary">CLNS1A</name>
    <name type="synonym">ICLN</name>
</gene>